<organism>
    <name type="scientific">Beutenbergia cavernae (strain ATCC BAA-8 / DSM 12333 / CCUG 43141 / JCM 11478 / NBRC 16432 / NCIMB 13614 / HKI 0122)</name>
    <dbReference type="NCBI Taxonomy" id="471853"/>
    <lineage>
        <taxon>Bacteria</taxon>
        <taxon>Bacillati</taxon>
        <taxon>Actinomycetota</taxon>
        <taxon>Actinomycetes</taxon>
        <taxon>Micrococcales</taxon>
        <taxon>Beutenbergiaceae</taxon>
        <taxon>Beutenbergia</taxon>
    </lineage>
</organism>
<keyword id="KW-0067">ATP-binding</keyword>
<keyword id="KW-0143">Chaperone</keyword>
<keyword id="KW-0547">Nucleotide-binding</keyword>
<keyword id="KW-0597">Phosphoprotein</keyword>
<keyword id="KW-1185">Reference proteome</keyword>
<keyword id="KW-0346">Stress response</keyword>
<proteinExistence type="inferred from homology"/>
<feature type="chain" id="PRO_1000205176" description="Chaperone protein DnaK">
    <location>
        <begin position="1"/>
        <end position="628"/>
    </location>
</feature>
<feature type="region of interest" description="Disordered" evidence="2">
    <location>
        <begin position="583"/>
        <end position="628"/>
    </location>
</feature>
<feature type="compositionally biased region" description="Low complexity" evidence="2">
    <location>
        <begin position="584"/>
        <end position="610"/>
    </location>
</feature>
<feature type="compositionally biased region" description="Acidic residues" evidence="2">
    <location>
        <begin position="611"/>
        <end position="628"/>
    </location>
</feature>
<feature type="modified residue" description="Phosphothreonine; by autocatalysis" evidence="1">
    <location>
        <position position="175"/>
    </location>
</feature>
<protein>
    <recommendedName>
        <fullName evidence="1">Chaperone protein DnaK</fullName>
    </recommendedName>
    <alternativeName>
        <fullName evidence="1">HSP70</fullName>
    </alternativeName>
    <alternativeName>
        <fullName evidence="1">Heat shock 70 kDa protein</fullName>
    </alternativeName>
    <alternativeName>
        <fullName evidence="1">Heat shock protein 70</fullName>
    </alternativeName>
</protein>
<evidence type="ECO:0000255" key="1">
    <source>
        <dbReference type="HAMAP-Rule" id="MF_00332"/>
    </source>
</evidence>
<evidence type="ECO:0000256" key="2">
    <source>
        <dbReference type="SAM" id="MobiDB-lite"/>
    </source>
</evidence>
<comment type="function">
    <text evidence="1">Acts as a chaperone.</text>
</comment>
<comment type="induction">
    <text evidence="1">By stress conditions e.g. heat shock.</text>
</comment>
<comment type="similarity">
    <text evidence="1">Belongs to the heat shock protein 70 family.</text>
</comment>
<name>DNAK_BEUC1</name>
<dbReference type="EMBL" id="CP001618">
    <property type="protein sequence ID" value="ACQ81951.1"/>
    <property type="molecule type" value="Genomic_DNA"/>
</dbReference>
<dbReference type="RefSeq" id="WP_015884188.1">
    <property type="nucleotide sequence ID" value="NC_012669.1"/>
</dbReference>
<dbReference type="SMR" id="C5C3P2"/>
<dbReference type="STRING" id="471853.Bcav_3709"/>
<dbReference type="KEGG" id="bcv:Bcav_3709"/>
<dbReference type="eggNOG" id="COG0443">
    <property type="taxonomic scope" value="Bacteria"/>
</dbReference>
<dbReference type="HOGENOM" id="CLU_005965_2_4_11"/>
<dbReference type="OrthoDB" id="9766019at2"/>
<dbReference type="Proteomes" id="UP000007962">
    <property type="component" value="Chromosome"/>
</dbReference>
<dbReference type="GO" id="GO:0005524">
    <property type="term" value="F:ATP binding"/>
    <property type="evidence" value="ECO:0007669"/>
    <property type="project" value="UniProtKB-UniRule"/>
</dbReference>
<dbReference type="GO" id="GO:0140662">
    <property type="term" value="F:ATP-dependent protein folding chaperone"/>
    <property type="evidence" value="ECO:0007669"/>
    <property type="project" value="InterPro"/>
</dbReference>
<dbReference type="GO" id="GO:0051082">
    <property type="term" value="F:unfolded protein binding"/>
    <property type="evidence" value="ECO:0007669"/>
    <property type="project" value="InterPro"/>
</dbReference>
<dbReference type="CDD" id="cd10234">
    <property type="entry name" value="ASKHA_NBD_HSP70_DnaK-like"/>
    <property type="match status" value="1"/>
</dbReference>
<dbReference type="FunFam" id="2.60.34.10:FF:000014">
    <property type="entry name" value="Chaperone protein DnaK HSP70"/>
    <property type="match status" value="1"/>
</dbReference>
<dbReference type="FunFam" id="1.20.1270.10:FF:000001">
    <property type="entry name" value="Molecular chaperone DnaK"/>
    <property type="match status" value="1"/>
</dbReference>
<dbReference type="FunFam" id="3.30.420.40:FF:000071">
    <property type="entry name" value="Molecular chaperone DnaK"/>
    <property type="match status" value="1"/>
</dbReference>
<dbReference type="FunFam" id="3.90.640.10:FF:000003">
    <property type="entry name" value="Molecular chaperone DnaK"/>
    <property type="match status" value="1"/>
</dbReference>
<dbReference type="Gene3D" id="1.20.1270.10">
    <property type="match status" value="1"/>
</dbReference>
<dbReference type="Gene3D" id="3.30.420.40">
    <property type="match status" value="2"/>
</dbReference>
<dbReference type="Gene3D" id="3.90.640.10">
    <property type="entry name" value="Actin, Chain A, domain 4"/>
    <property type="match status" value="1"/>
</dbReference>
<dbReference type="Gene3D" id="2.60.34.10">
    <property type="entry name" value="Substrate Binding Domain Of DNAk, Chain A, domain 1"/>
    <property type="match status" value="1"/>
</dbReference>
<dbReference type="HAMAP" id="MF_00332">
    <property type="entry name" value="DnaK"/>
    <property type="match status" value="1"/>
</dbReference>
<dbReference type="InterPro" id="IPR043129">
    <property type="entry name" value="ATPase_NBD"/>
</dbReference>
<dbReference type="InterPro" id="IPR012725">
    <property type="entry name" value="Chaperone_DnaK"/>
</dbReference>
<dbReference type="InterPro" id="IPR018181">
    <property type="entry name" value="Heat_shock_70_CS"/>
</dbReference>
<dbReference type="InterPro" id="IPR029048">
    <property type="entry name" value="HSP70_C_sf"/>
</dbReference>
<dbReference type="InterPro" id="IPR029047">
    <property type="entry name" value="HSP70_peptide-bd_sf"/>
</dbReference>
<dbReference type="InterPro" id="IPR013126">
    <property type="entry name" value="Hsp_70_fam"/>
</dbReference>
<dbReference type="NCBIfam" id="NF001413">
    <property type="entry name" value="PRK00290.1"/>
    <property type="match status" value="1"/>
</dbReference>
<dbReference type="NCBIfam" id="TIGR02350">
    <property type="entry name" value="prok_dnaK"/>
    <property type="match status" value="1"/>
</dbReference>
<dbReference type="PANTHER" id="PTHR19375">
    <property type="entry name" value="HEAT SHOCK PROTEIN 70KDA"/>
    <property type="match status" value="1"/>
</dbReference>
<dbReference type="Pfam" id="PF00012">
    <property type="entry name" value="HSP70"/>
    <property type="match status" value="1"/>
</dbReference>
<dbReference type="PRINTS" id="PR00301">
    <property type="entry name" value="HEATSHOCK70"/>
</dbReference>
<dbReference type="SUPFAM" id="SSF53067">
    <property type="entry name" value="Actin-like ATPase domain"/>
    <property type="match status" value="2"/>
</dbReference>
<dbReference type="SUPFAM" id="SSF100934">
    <property type="entry name" value="Heat shock protein 70kD (HSP70), C-terminal subdomain"/>
    <property type="match status" value="1"/>
</dbReference>
<dbReference type="SUPFAM" id="SSF100920">
    <property type="entry name" value="Heat shock protein 70kD (HSP70), peptide-binding domain"/>
    <property type="match status" value="1"/>
</dbReference>
<dbReference type="PROSITE" id="PS00297">
    <property type="entry name" value="HSP70_1"/>
    <property type="match status" value="1"/>
</dbReference>
<dbReference type="PROSITE" id="PS00329">
    <property type="entry name" value="HSP70_2"/>
    <property type="match status" value="1"/>
</dbReference>
<dbReference type="PROSITE" id="PS01036">
    <property type="entry name" value="HSP70_3"/>
    <property type="match status" value="1"/>
</dbReference>
<sequence>MARAVGIDLGTTNSVVAVLEGGEPTVIANAEGSRTTPSVVAFSKSGEVLVGEVAKRQAVTNVDRTITSVKRHMGTDWKVSVDDKSYTAQEISARVLGKLKKDAESYLGEPVTDAVITVPAYFNDAERQATKDAGQIAGLNVLRIVNEPTAAALAYGLERGKEDELILVFDLGGGTFDVSLLEVGKDEDDFSTIQVRATNGDNRLGGDDWDQRIVDWLVSQVKNKDGVDLSKDKIALQRLREAAETAKKELSSATSTTISLQYLSMSENGPIHLDEKLTRAQFQQMTEDLLERTKTPFHNVIKDAGISLSAIDHVVLVGGSTRMPAVTDVVKELTGGKEPNKGVNPDEVVAVGAALQAGVIQGERKDVLLIDVTPLSLGIETKGGVMTKLIERNTAIPTKRSEVFSTAEDNQPSVLIQVFQGERDFASDNKALGTFELTGIAPAPRGMPQIEVTFDIDANGIVHVSAKDRGTGKEQSMTITGGSALPKDEIDRMIKEAEAHAAEDHKRREEAEVRNTAEQLVYSTEKLLTENAEKLPEDVASEVRAAVAELKTALEGTDIDAVKAKQEALATASQKIGQALYASAEQEQAAGNPGAAEADAEAAAGAGTPEGADDDVIDAEIVDEDEKK</sequence>
<accession>C5C3P2</accession>
<reference key="1">
    <citation type="journal article" date="2009" name="Stand. Genomic Sci.">
        <title>Complete genome sequence of Beutenbergia cavernae type strain (HKI 0122).</title>
        <authorList>
            <person name="Land M."/>
            <person name="Pukall R."/>
            <person name="Abt B."/>
            <person name="Goker M."/>
            <person name="Rohde M."/>
            <person name="Glavina Del Rio T."/>
            <person name="Tice H."/>
            <person name="Copeland A."/>
            <person name="Cheng J.F."/>
            <person name="Lucas S."/>
            <person name="Chen F."/>
            <person name="Nolan M."/>
            <person name="Bruce D."/>
            <person name="Goodwin L."/>
            <person name="Pitluck S."/>
            <person name="Ivanova N."/>
            <person name="Mavromatis K."/>
            <person name="Ovchinnikova G."/>
            <person name="Pati A."/>
            <person name="Chen A."/>
            <person name="Palaniappan K."/>
            <person name="Hauser L."/>
            <person name="Chang Y.J."/>
            <person name="Jefferies C.C."/>
            <person name="Saunders E."/>
            <person name="Brettin T."/>
            <person name="Detter J.C."/>
            <person name="Han C."/>
            <person name="Chain P."/>
            <person name="Bristow J."/>
            <person name="Eisen J.A."/>
            <person name="Markowitz V."/>
            <person name="Hugenholtz P."/>
            <person name="Kyrpides N.C."/>
            <person name="Klenk H.P."/>
            <person name="Lapidus A."/>
        </authorList>
    </citation>
    <scope>NUCLEOTIDE SEQUENCE [LARGE SCALE GENOMIC DNA]</scope>
    <source>
        <strain>ATCC BAA-8 / DSM 12333 / CCUG 43141 / JCM 11478 / NBRC 16432 / NCIMB 13614 / HKI 0122</strain>
    </source>
</reference>
<gene>
    <name evidence="1" type="primary">dnaK</name>
    <name type="ordered locus">Bcav_3709</name>
</gene>